<accession>P61776</accession>
<keyword id="KW-1003">Cell membrane</keyword>
<keyword id="KW-0143">Chaperone</keyword>
<keyword id="KW-1015">Disulfide bond</keyword>
<keyword id="KW-0249">Electron transport</keyword>
<keyword id="KW-0472">Membrane</keyword>
<keyword id="KW-0560">Oxidoreductase</keyword>
<keyword id="KW-0676">Redox-active center</keyword>
<keyword id="KW-0812">Transmembrane</keyword>
<keyword id="KW-1133">Transmembrane helix</keyword>
<keyword id="KW-0813">Transport</keyword>
<reference key="1">
    <citation type="journal article" date="2004" name="Nucleic Acids Res.">
        <title>The genome sequence of Bacillus cereus ATCC 10987 reveals metabolic adaptations and a large plasmid related to Bacillus anthracis pXO1.</title>
        <authorList>
            <person name="Rasko D.A."/>
            <person name="Ravel J."/>
            <person name="Oekstad O.A."/>
            <person name="Helgason E."/>
            <person name="Cer R.Z."/>
            <person name="Jiang L."/>
            <person name="Shores K.A."/>
            <person name="Fouts D.E."/>
            <person name="Tourasse N.J."/>
            <person name="Angiuoli S.V."/>
            <person name="Kolonay J.F."/>
            <person name="Nelson W.C."/>
            <person name="Kolstoe A.-B."/>
            <person name="Fraser C.M."/>
            <person name="Read T.D."/>
        </authorList>
    </citation>
    <scope>NUCLEOTIDE SEQUENCE [LARGE SCALE GENOMIC DNA]</scope>
    <source>
        <strain>ATCC 10987 / NRS 248</strain>
    </source>
</reference>
<feature type="chain" id="PRO_0000059372" description="Probable disulfide formation protein C 1">
    <location>
        <begin position="1"/>
        <end position="139"/>
    </location>
</feature>
<feature type="transmembrane region" description="Helical" evidence="2">
    <location>
        <begin position="8"/>
        <end position="27"/>
    </location>
</feature>
<feature type="transmembrane region" description="Helical" evidence="2">
    <location>
        <begin position="42"/>
        <end position="61"/>
    </location>
</feature>
<feature type="transmembrane region" description="Helical" evidence="2">
    <location>
        <begin position="68"/>
        <end position="85"/>
    </location>
</feature>
<feature type="transmembrane region" description="Helical" evidence="2">
    <location>
        <begin position="113"/>
        <end position="135"/>
    </location>
</feature>
<feature type="disulfide bond" description="Redox-active" evidence="1">
    <location>
        <begin position="37"/>
        <end position="40"/>
    </location>
</feature>
<feature type="disulfide bond" description="Redox-active" evidence="1">
    <location>
        <begin position="99"/>
        <end position="104"/>
    </location>
</feature>
<protein>
    <recommendedName>
        <fullName>Probable disulfide formation protein C 1</fullName>
    </recommendedName>
    <alternativeName>
        <fullName>Disulfide oxidoreductase C 1</fullName>
    </alternativeName>
    <alternativeName>
        <fullName>Thiol-disulfide oxidoreductase C 1</fullName>
    </alternativeName>
</protein>
<comment type="function">
    <text evidence="1">Required for disulfide bond formation in some proteins.</text>
</comment>
<comment type="subcellular location">
    <subcellularLocation>
        <location evidence="3">Cell membrane</location>
        <topology evidence="3">Multi-pass membrane protein</topology>
    </subcellularLocation>
</comment>
<comment type="similarity">
    <text evidence="3">Belongs to the DsbB family. BdbC subfamily.</text>
</comment>
<evidence type="ECO:0000250" key="1"/>
<evidence type="ECO:0000255" key="2"/>
<evidence type="ECO:0000305" key="3"/>
<gene>
    <name type="primary">bdbC1</name>
    <name type="ordered locus">BCE_0823</name>
</gene>
<sequence>MGREKKQEYALFTAWGASFIATLGSLYFSEIMKFEPCVLCWYQRIFMYPFVLWLGIAVVKKDYRIANYSLPIASIGACISLYHYAIQKIAAFSAAGAACGRVPCTGEYINWFGFVTIPFLALIGFITIAVCSFIVIKNK</sequence>
<name>BDBC1_BACC1</name>
<proteinExistence type="inferred from homology"/>
<organism>
    <name type="scientific">Bacillus cereus (strain ATCC 10987 / NRS 248)</name>
    <dbReference type="NCBI Taxonomy" id="222523"/>
    <lineage>
        <taxon>Bacteria</taxon>
        <taxon>Bacillati</taxon>
        <taxon>Bacillota</taxon>
        <taxon>Bacilli</taxon>
        <taxon>Bacillales</taxon>
        <taxon>Bacillaceae</taxon>
        <taxon>Bacillus</taxon>
        <taxon>Bacillus cereus group</taxon>
    </lineage>
</organism>
<dbReference type="EMBL" id="AE017194">
    <property type="protein sequence ID" value="AAS39755.1"/>
    <property type="molecule type" value="Genomic_DNA"/>
</dbReference>
<dbReference type="KEGG" id="bca:BCE_0823"/>
<dbReference type="HOGENOM" id="CLU_128688_0_0_9"/>
<dbReference type="Proteomes" id="UP000002527">
    <property type="component" value="Chromosome"/>
</dbReference>
<dbReference type="GO" id="GO:0005886">
    <property type="term" value="C:plasma membrane"/>
    <property type="evidence" value="ECO:0007669"/>
    <property type="project" value="UniProtKB-SubCell"/>
</dbReference>
<dbReference type="GO" id="GO:0015035">
    <property type="term" value="F:protein-disulfide reductase activity"/>
    <property type="evidence" value="ECO:0007669"/>
    <property type="project" value="UniProtKB-UniRule"/>
</dbReference>
<dbReference type="GO" id="GO:0006457">
    <property type="term" value="P:protein folding"/>
    <property type="evidence" value="ECO:0007669"/>
    <property type="project" value="InterPro"/>
</dbReference>
<dbReference type="FunFam" id="1.20.1550.10:FF:000003">
    <property type="entry name" value="Probable disulfide formation protein"/>
    <property type="match status" value="1"/>
</dbReference>
<dbReference type="Gene3D" id="1.20.1550.10">
    <property type="entry name" value="DsbB-like"/>
    <property type="match status" value="1"/>
</dbReference>
<dbReference type="HAMAP" id="MF_00287">
    <property type="entry name" value="BdbC"/>
    <property type="match status" value="1"/>
</dbReference>
<dbReference type="InterPro" id="IPR003752">
    <property type="entry name" value="DiS_bond_form_DsbB/BdbC"/>
</dbReference>
<dbReference type="InterPro" id="IPR012187">
    <property type="entry name" value="Disulphide_bond_form_BdbC"/>
</dbReference>
<dbReference type="InterPro" id="IPR023380">
    <property type="entry name" value="DsbB-like_sf"/>
</dbReference>
<dbReference type="NCBIfam" id="NF002849">
    <property type="entry name" value="PRK03113.1"/>
    <property type="match status" value="1"/>
</dbReference>
<dbReference type="PANTHER" id="PTHR43469">
    <property type="entry name" value="DISULFIDE FORMATION PROTEIN-RELATED"/>
    <property type="match status" value="1"/>
</dbReference>
<dbReference type="PANTHER" id="PTHR43469:SF1">
    <property type="entry name" value="SPBETA PROPHAGE-DERIVED DISULFIDE BOND FORMATION PROTEIN B"/>
    <property type="match status" value="1"/>
</dbReference>
<dbReference type="Pfam" id="PF02600">
    <property type="entry name" value="DsbB"/>
    <property type="match status" value="1"/>
</dbReference>
<dbReference type="PIRSF" id="PIRSF036659">
    <property type="entry name" value="BdbC"/>
    <property type="match status" value="1"/>
</dbReference>
<dbReference type="SUPFAM" id="SSF158442">
    <property type="entry name" value="DsbB-like"/>
    <property type="match status" value="1"/>
</dbReference>